<keyword id="KW-0694">RNA-binding</keyword>
<keyword id="KW-0804">Transcription</keyword>
<keyword id="KW-0889">Transcription antitermination</keyword>
<keyword id="KW-0805">Transcription regulation</keyword>
<evidence type="ECO:0000255" key="1">
    <source>
        <dbReference type="HAMAP-Rule" id="MF_00073"/>
    </source>
</evidence>
<evidence type="ECO:0000256" key="2">
    <source>
        <dbReference type="SAM" id="MobiDB-lite"/>
    </source>
</evidence>
<sequence length="163" mass="18205">MTTFLSDSEHPQDVKAPPKSARRRAREFVLQGLYQWRVGGADEASIEAYAPEMEGFAKADREFFVGTLRGVISQQEKLIEQVSTHIDRPFNELSPVEACILMLGSFEMLNHAETPYRVIINEAIELTKAFGGTDGHKYVNGVLDKVAAILRPDEVAARKQAKK</sequence>
<organism>
    <name type="scientific">Dechloromonas aromatica (strain RCB)</name>
    <dbReference type="NCBI Taxonomy" id="159087"/>
    <lineage>
        <taxon>Bacteria</taxon>
        <taxon>Pseudomonadati</taxon>
        <taxon>Pseudomonadota</taxon>
        <taxon>Betaproteobacteria</taxon>
        <taxon>Rhodocyclales</taxon>
        <taxon>Azonexaceae</taxon>
        <taxon>Dechloromonas</taxon>
    </lineage>
</organism>
<feature type="chain" id="PRO_0000265511" description="Transcription antitermination protein NusB">
    <location>
        <begin position="1"/>
        <end position="163"/>
    </location>
</feature>
<feature type="region of interest" description="Disordered" evidence="2">
    <location>
        <begin position="1"/>
        <end position="21"/>
    </location>
</feature>
<comment type="function">
    <text evidence="1">Involved in transcription antitermination. Required for transcription of ribosomal RNA (rRNA) genes. Binds specifically to the boxA antiterminator sequence of the ribosomal RNA (rrn) operons.</text>
</comment>
<comment type="similarity">
    <text evidence="1">Belongs to the NusB family.</text>
</comment>
<protein>
    <recommendedName>
        <fullName evidence="1">Transcription antitermination protein NusB</fullName>
    </recommendedName>
    <alternativeName>
        <fullName evidence="1">Antitermination factor NusB</fullName>
    </alternativeName>
</protein>
<gene>
    <name evidence="1" type="primary">nusB</name>
    <name type="ordered locus">Daro_3739</name>
</gene>
<accession>Q479L3</accession>
<dbReference type="EMBL" id="CP000089">
    <property type="protein sequence ID" value="AAZ48468.1"/>
    <property type="molecule type" value="Genomic_DNA"/>
</dbReference>
<dbReference type="SMR" id="Q479L3"/>
<dbReference type="STRING" id="159087.Daro_3739"/>
<dbReference type="KEGG" id="dar:Daro_3739"/>
<dbReference type="eggNOG" id="COG0781">
    <property type="taxonomic scope" value="Bacteria"/>
</dbReference>
<dbReference type="HOGENOM" id="CLU_087843_4_1_4"/>
<dbReference type="OrthoDB" id="9789556at2"/>
<dbReference type="GO" id="GO:0005829">
    <property type="term" value="C:cytosol"/>
    <property type="evidence" value="ECO:0007669"/>
    <property type="project" value="TreeGrafter"/>
</dbReference>
<dbReference type="GO" id="GO:0003723">
    <property type="term" value="F:RNA binding"/>
    <property type="evidence" value="ECO:0007669"/>
    <property type="project" value="UniProtKB-UniRule"/>
</dbReference>
<dbReference type="GO" id="GO:0006353">
    <property type="term" value="P:DNA-templated transcription termination"/>
    <property type="evidence" value="ECO:0007669"/>
    <property type="project" value="UniProtKB-UniRule"/>
</dbReference>
<dbReference type="GO" id="GO:0031564">
    <property type="term" value="P:transcription antitermination"/>
    <property type="evidence" value="ECO:0007669"/>
    <property type="project" value="UniProtKB-KW"/>
</dbReference>
<dbReference type="Gene3D" id="1.10.940.10">
    <property type="entry name" value="NusB-like"/>
    <property type="match status" value="1"/>
</dbReference>
<dbReference type="HAMAP" id="MF_00073">
    <property type="entry name" value="NusB"/>
    <property type="match status" value="1"/>
</dbReference>
<dbReference type="InterPro" id="IPR035926">
    <property type="entry name" value="NusB-like_sf"/>
</dbReference>
<dbReference type="InterPro" id="IPR011605">
    <property type="entry name" value="NusB_fam"/>
</dbReference>
<dbReference type="InterPro" id="IPR006027">
    <property type="entry name" value="NusB_RsmB_TIM44"/>
</dbReference>
<dbReference type="NCBIfam" id="TIGR01951">
    <property type="entry name" value="nusB"/>
    <property type="match status" value="1"/>
</dbReference>
<dbReference type="PANTHER" id="PTHR11078:SF3">
    <property type="entry name" value="ANTITERMINATION NUSB DOMAIN-CONTAINING PROTEIN"/>
    <property type="match status" value="1"/>
</dbReference>
<dbReference type="PANTHER" id="PTHR11078">
    <property type="entry name" value="N UTILIZATION SUBSTANCE PROTEIN B-RELATED"/>
    <property type="match status" value="1"/>
</dbReference>
<dbReference type="Pfam" id="PF01029">
    <property type="entry name" value="NusB"/>
    <property type="match status" value="1"/>
</dbReference>
<dbReference type="SUPFAM" id="SSF48013">
    <property type="entry name" value="NusB-like"/>
    <property type="match status" value="1"/>
</dbReference>
<proteinExistence type="inferred from homology"/>
<name>NUSB_DECAR</name>
<reference key="1">
    <citation type="journal article" date="2009" name="BMC Genomics">
        <title>Metabolic analysis of the soil microbe Dechloromonas aromatica str. RCB: indications of a surprisingly complex life-style and cryptic anaerobic pathways for aromatic degradation.</title>
        <authorList>
            <person name="Salinero K.K."/>
            <person name="Keller K."/>
            <person name="Feil W.S."/>
            <person name="Feil H."/>
            <person name="Trong S."/>
            <person name="Di Bartolo G."/>
            <person name="Lapidus A."/>
        </authorList>
    </citation>
    <scope>NUCLEOTIDE SEQUENCE [LARGE SCALE GENOMIC DNA]</scope>
    <source>
        <strain>RCB</strain>
    </source>
</reference>